<name>GCS21_SACEN</name>
<organism>
    <name type="scientific">Saccharopolyspora erythraea (strain ATCC 11635 / DSM 40517 / JCM 4748 / NBRC 13426 / NCIMB 8594 / NRRL 2338)</name>
    <dbReference type="NCBI Taxonomy" id="405948"/>
    <lineage>
        <taxon>Bacteria</taxon>
        <taxon>Bacillati</taxon>
        <taxon>Actinomycetota</taxon>
        <taxon>Actinomycetes</taxon>
        <taxon>Pseudonocardiales</taxon>
        <taxon>Pseudonocardiaceae</taxon>
        <taxon>Saccharopolyspora</taxon>
    </lineage>
</organism>
<protein>
    <recommendedName>
        <fullName evidence="1">Putative glutamate--cysteine ligase 2-1</fullName>
        <ecNumber evidence="1">6.3.2.2</ecNumber>
    </recommendedName>
    <alternativeName>
        <fullName evidence="1">Gamma-glutamylcysteine synthetase 2-1</fullName>
        <shortName evidence="1">GCS 2-1</shortName>
        <shortName evidence="1">Gamma-GCS 2-1</shortName>
    </alternativeName>
</protein>
<proteinExistence type="inferred from homology"/>
<comment type="function">
    <text evidence="1">ATP-dependent carboxylate-amine ligase which exhibits weak glutamate--cysteine ligase activity.</text>
</comment>
<comment type="catalytic activity">
    <reaction evidence="1">
        <text>L-cysteine + L-glutamate + ATP = gamma-L-glutamyl-L-cysteine + ADP + phosphate + H(+)</text>
        <dbReference type="Rhea" id="RHEA:13285"/>
        <dbReference type="ChEBI" id="CHEBI:15378"/>
        <dbReference type="ChEBI" id="CHEBI:29985"/>
        <dbReference type="ChEBI" id="CHEBI:30616"/>
        <dbReference type="ChEBI" id="CHEBI:35235"/>
        <dbReference type="ChEBI" id="CHEBI:43474"/>
        <dbReference type="ChEBI" id="CHEBI:58173"/>
        <dbReference type="ChEBI" id="CHEBI:456216"/>
        <dbReference type="EC" id="6.3.2.2"/>
    </reaction>
</comment>
<comment type="similarity">
    <text evidence="1">Belongs to the glutamate--cysteine ligase type 2 family. YbdK subfamily.</text>
</comment>
<keyword id="KW-0067">ATP-binding</keyword>
<keyword id="KW-0436">Ligase</keyword>
<keyword id="KW-0547">Nucleotide-binding</keyword>
<keyword id="KW-1185">Reference proteome</keyword>
<gene>
    <name type="ordered locus">SACE_2909</name>
</gene>
<feature type="chain" id="PRO_0000291514" description="Putative glutamate--cysteine ligase 2-1">
    <location>
        <begin position="1"/>
        <end position="374"/>
    </location>
</feature>
<dbReference type="EC" id="6.3.2.2" evidence="1"/>
<dbReference type="EMBL" id="AM420293">
    <property type="protein sequence ID" value="CAM02187.1"/>
    <property type="molecule type" value="Genomic_DNA"/>
</dbReference>
<dbReference type="RefSeq" id="WP_009946332.1">
    <property type="nucleotide sequence ID" value="NC_009142.1"/>
</dbReference>
<dbReference type="SMR" id="A4FDR2"/>
<dbReference type="STRING" id="405948.SACE_2909"/>
<dbReference type="KEGG" id="sen:SACE_2909"/>
<dbReference type="eggNOG" id="COG2170">
    <property type="taxonomic scope" value="Bacteria"/>
</dbReference>
<dbReference type="HOGENOM" id="CLU_044848_0_0_11"/>
<dbReference type="OrthoDB" id="9803842at2"/>
<dbReference type="Proteomes" id="UP000006728">
    <property type="component" value="Chromosome"/>
</dbReference>
<dbReference type="GO" id="GO:0005524">
    <property type="term" value="F:ATP binding"/>
    <property type="evidence" value="ECO:0007669"/>
    <property type="project" value="UniProtKB-KW"/>
</dbReference>
<dbReference type="GO" id="GO:0004357">
    <property type="term" value="F:glutamate-cysteine ligase activity"/>
    <property type="evidence" value="ECO:0007669"/>
    <property type="project" value="UniProtKB-EC"/>
</dbReference>
<dbReference type="GO" id="GO:0042398">
    <property type="term" value="P:modified amino acid biosynthetic process"/>
    <property type="evidence" value="ECO:0007669"/>
    <property type="project" value="InterPro"/>
</dbReference>
<dbReference type="Gene3D" id="3.30.590.20">
    <property type="match status" value="1"/>
</dbReference>
<dbReference type="HAMAP" id="MF_01609">
    <property type="entry name" value="Glu_cys_ligase_2"/>
    <property type="match status" value="1"/>
</dbReference>
<dbReference type="InterPro" id="IPR050141">
    <property type="entry name" value="GCL_type2/YbdK_subfam"/>
</dbReference>
<dbReference type="InterPro" id="IPR006336">
    <property type="entry name" value="GCS2"/>
</dbReference>
<dbReference type="InterPro" id="IPR014746">
    <property type="entry name" value="Gln_synth/guanido_kin_cat_dom"/>
</dbReference>
<dbReference type="InterPro" id="IPR011793">
    <property type="entry name" value="YbdK"/>
</dbReference>
<dbReference type="NCBIfam" id="TIGR02050">
    <property type="entry name" value="gshA_cyan_rel"/>
    <property type="match status" value="1"/>
</dbReference>
<dbReference type="NCBIfam" id="NF010041">
    <property type="entry name" value="PRK13517.1-1"/>
    <property type="match status" value="1"/>
</dbReference>
<dbReference type="PANTHER" id="PTHR36510">
    <property type="entry name" value="GLUTAMATE--CYSTEINE LIGASE 2-RELATED"/>
    <property type="match status" value="1"/>
</dbReference>
<dbReference type="PANTHER" id="PTHR36510:SF1">
    <property type="entry name" value="GLUTAMATE--CYSTEINE LIGASE 2-RELATED"/>
    <property type="match status" value="1"/>
</dbReference>
<dbReference type="Pfam" id="PF04107">
    <property type="entry name" value="GCS2"/>
    <property type="match status" value="1"/>
</dbReference>
<dbReference type="SUPFAM" id="SSF55931">
    <property type="entry name" value="Glutamine synthetase/guanido kinase"/>
    <property type="match status" value="1"/>
</dbReference>
<accession>A4FDR2</accession>
<reference key="1">
    <citation type="journal article" date="2007" name="Nat. Biotechnol.">
        <title>Complete genome sequence of the erythromycin-producing bacterium Saccharopolyspora erythraea NRRL23338.</title>
        <authorList>
            <person name="Oliynyk M."/>
            <person name="Samborskyy M."/>
            <person name="Lester J.B."/>
            <person name="Mironenko T."/>
            <person name="Scott N."/>
            <person name="Dickens S."/>
            <person name="Haydock S.F."/>
            <person name="Leadlay P.F."/>
        </authorList>
    </citation>
    <scope>NUCLEOTIDE SEQUENCE [LARGE SCALE GENOMIC DNA]</scope>
    <source>
        <strain>ATCC 11635 / DSM 40517 / JCM 4748 / NBRC 13426 / NCIMB 8594 / NRRL 2338</strain>
    </source>
</reference>
<sequence length="374" mass="40549">MLDLTLGVEEEFLLLDPGTLEPAAAADRFRAETDRGEVHRELAPAQIESATAVCRTLEELHHDLSGLRRALAADAAEQGYRLASVGVPPIGSAGPPPVTDSPRYRRMYETYGSIIEDQGVCGCHVHVGALDLETALVAGNHLRPWLPALLLLTTNSPFFRGGDTGYASWRTTLWSRWPAAGPPPVLTSARHYHYVVDCLLASGAVLDSGMLYWYARPSHRVPTLEVRVADAAATVDEAVLLAGLVRGLVGVALSDRPGPVRPVDDAVLRAACWCSAHHGLEGFSLDVGTGRLVPSWHLVDDLVEHVRPVLERYGDLDAVRALLAKLRENGSAARRQREVFRRHRDIGEVVEHVLVETVPDENAALPGRSISPSA</sequence>
<evidence type="ECO:0000255" key="1">
    <source>
        <dbReference type="HAMAP-Rule" id="MF_01609"/>
    </source>
</evidence>